<sequence>MRKIIHIDCDCFYAALEMRDDPSLRGKALAVGGSPDKRGVVATCSYEARAYGVRSAMAMRTALKLCPDLLVVRPRFDVYRAVSKQIHAIFRDYTDLIEPLSLDEAYLDVSASPHFAGSATRIAQDIRRRVAEELHITVSAGVAPNKFLAKIASDWRKPDGLFVITPEQVDGFVAELPVAKLHGVGKVTAERLARMGIRTCADLRQGSKLSLVREFGSFGERLWGLAHGIDERPVEVDSRRQSVSVECTFDRDLPDLAACLEELPTLLEELDGRLQRLDGSYRPDKPFVKLKFHDFTQTTVEQSGAGRDLESYRQLLGQAFARGNRPVRLIGVGVRLLDLQGAHEQLRLF</sequence>
<comment type="function">
    <text evidence="1">Poorly processive, error-prone DNA polymerase involved in untargeted mutagenesis. Copies undamaged DNA at stalled replication forks, which arise in vivo from mismatched or misaligned primer ends. These misaligned primers can be extended by PolIV. Exhibits no 3'-5' exonuclease (proofreading) activity. May be involved in translesional synthesis, in conjunction with the beta clamp from PolIII.</text>
</comment>
<comment type="catalytic activity">
    <reaction evidence="1">
        <text>DNA(n) + a 2'-deoxyribonucleoside 5'-triphosphate = DNA(n+1) + diphosphate</text>
        <dbReference type="Rhea" id="RHEA:22508"/>
        <dbReference type="Rhea" id="RHEA-COMP:17339"/>
        <dbReference type="Rhea" id="RHEA-COMP:17340"/>
        <dbReference type="ChEBI" id="CHEBI:33019"/>
        <dbReference type="ChEBI" id="CHEBI:61560"/>
        <dbReference type="ChEBI" id="CHEBI:173112"/>
        <dbReference type="EC" id="2.7.7.7"/>
    </reaction>
</comment>
<comment type="cofactor">
    <cofactor evidence="1">
        <name>Mg(2+)</name>
        <dbReference type="ChEBI" id="CHEBI:18420"/>
    </cofactor>
    <text evidence="1">Binds 2 magnesium ions per subunit.</text>
</comment>
<comment type="subunit">
    <text evidence="1">Monomer.</text>
</comment>
<comment type="subcellular location">
    <subcellularLocation>
        <location evidence="1">Cytoplasm</location>
    </subcellularLocation>
</comment>
<comment type="similarity">
    <text evidence="1">Belongs to the DNA polymerase type-Y family.</text>
</comment>
<protein>
    <recommendedName>
        <fullName evidence="1">DNA polymerase IV</fullName>
        <shortName evidence="1">Pol IV</shortName>
        <ecNumber evidence="1">2.7.7.7</ecNumber>
    </recommendedName>
</protein>
<feature type="chain" id="PRO_0000173932" description="DNA polymerase IV">
    <location>
        <begin position="1"/>
        <end position="349"/>
    </location>
</feature>
<feature type="domain" description="UmuC" evidence="1">
    <location>
        <begin position="4"/>
        <end position="185"/>
    </location>
</feature>
<feature type="active site" evidence="1">
    <location>
        <position position="104"/>
    </location>
</feature>
<feature type="binding site" evidence="1">
    <location>
        <position position="8"/>
    </location>
    <ligand>
        <name>Mg(2+)</name>
        <dbReference type="ChEBI" id="CHEBI:18420"/>
    </ligand>
</feature>
<feature type="binding site" evidence="1">
    <location>
        <position position="103"/>
    </location>
    <ligand>
        <name>Mg(2+)</name>
        <dbReference type="ChEBI" id="CHEBI:18420"/>
    </ligand>
</feature>
<feature type="site" description="Substrate discrimination" evidence="1">
    <location>
        <position position="13"/>
    </location>
</feature>
<reference key="1">
    <citation type="journal article" date="2000" name="Nature">
        <title>Complete genome sequence of Pseudomonas aeruginosa PAO1, an opportunistic pathogen.</title>
        <authorList>
            <person name="Stover C.K."/>
            <person name="Pham X.-Q.T."/>
            <person name="Erwin A.L."/>
            <person name="Mizoguchi S.D."/>
            <person name="Warrener P."/>
            <person name="Hickey M.J."/>
            <person name="Brinkman F.S.L."/>
            <person name="Hufnagle W.O."/>
            <person name="Kowalik D.J."/>
            <person name="Lagrou M."/>
            <person name="Garber R.L."/>
            <person name="Goltry L."/>
            <person name="Tolentino E."/>
            <person name="Westbrock-Wadman S."/>
            <person name="Yuan Y."/>
            <person name="Brody L.L."/>
            <person name="Coulter S.N."/>
            <person name="Folger K.R."/>
            <person name="Kas A."/>
            <person name="Larbig K."/>
            <person name="Lim R.M."/>
            <person name="Smith K.A."/>
            <person name="Spencer D.H."/>
            <person name="Wong G.K.-S."/>
            <person name="Wu Z."/>
            <person name="Paulsen I.T."/>
            <person name="Reizer J."/>
            <person name="Saier M.H. Jr."/>
            <person name="Hancock R.E.W."/>
            <person name="Lory S."/>
            <person name="Olson M.V."/>
        </authorList>
    </citation>
    <scope>NUCLEOTIDE SEQUENCE [LARGE SCALE GENOMIC DNA]</scope>
    <source>
        <strain>ATCC 15692 / DSM 22644 / CIP 104116 / JCM 14847 / LMG 12228 / 1C / PRS 101 / PAO1</strain>
    </source>
</reference>
<name>DPO4_PSEAE</name>
<accession>Q9I534</accession>
<keyword id="KW-0963">Cytoplasm</keyword>
<keyword id="KW-0227">DNA damage</keyword>
<keyword id="KW-0234">DNA repair</keyword>
<keyword id="KW-0235">DNA replication</keyword>
<keyword id="KW-0238">DNA-binding</keyword>
<keyword id="KW-0239">DNA-directed DNA polymerase</keyword>
<keyword id="KW-0460">Magnesium</keyword>
<keyword id="KW-0479">Metal-binding</keyword>
<keyword id="KW-0515">Mutator protein</keyword>
<keyword id="KW-0548">Nucleotidyltransferase</keyword>
<keyword id="KW-1185">Reference proteome</keyword>
<keyword id="KW-0808">Transferase</keyword>
<dbReference type="EC" id="2.7.7.7" evidence="1"/>
<dbReference type="EMBL" id="AE004091">
    <property type="protein sequence ID" value="AAG04312.1"/>
    <property type="molecule type" value="Genomic_DNA"/>
</dbReference>
<dbReference type="PIR" id="A83531">
    <property type="entry name" value="A83531"/>
</dbReference>
<dbReference type="RefSeq" id="NP_249614.1">
    <property type="nucleotide sequence ID" value="NC_002516.2"/>
</dbReference>
<dbReference type="RefSeq" id="WP_003086018.1">
    <property type="nucleotide sequence ID" value="NZ_QZGE01000007.1"/>
</dbReference>
<dbReference type="SMR" id="Q9I534"/>
<dbReference type="FunCoup" id="Q9I534">
    <property type="interactions" value="576"/>
</dbReference>
<dbReference type="STRING" id="208964.PA0923"/>
<dbReference type="PaxDb" id="208964-PA0923"/>
<dbReference type="DNASU" id="881987"/>
<dbReference type="GeneID" id="881987"/>
<dbReference type="KEGG" id="pae:PA0923"/>
<dbReference type="PATRIC" id="fig|208964.12.peg.958"/>
<dbReference type="PseudoCAP" id="PA0923"/>
<dbReference type="HOGENOM" id="CLU_012348_1_2_6"/>
<dbReference type="InParanoid" id="Q9I534"/>
<dbReference type="OrthoDB" id="9808813at2"/>
<dbReference type="PhylomeDB" id="Q9I534"/>
<dbReference type="BioCyc" id="PAER208964:G1FZ6-943-MONOMER"/>
<dbReference type="Proteomes" id="UP000002438">
    <property type="component" value="Chromosome"/>
</dbReference>
<dbReference type="GO" id="GO:0005737">
    <property type="term" value="C:cytoplasm"/>
    <property type="evidence" value="ECO:0007669"/>
    <property type="project" value="UniProtKB-SubCell"/>
</dbReference>
<dbReference type="GO" id="GO:0003684">
    <property type="term" value="F:damaged DNA binding"/>
    <property type="evidence" value="ECO:0007669"/>
    <property type="project" value="InterPro"/>
</dbReference>
<dbReference type="GO" id="GO:0003887">
    <property type="term" value="F:DNA-directed DNA polymerase activity"/>
    <property type="evidence" value="ECO:0000318"/>
    <property type="project" value="GO_Central"/>
</dbReference>
<dbReference type="GO" id="GO:0000287">
    <property type="term" value="F:magnesium ion binding"/>
    <property type="evidence" value="ECO:0007669"/>
    <property type="project" value="UniProtKB-UniRule"/>
</dbReference>
<dbReference type="GO" id="GO:0006261">
    <property type="term" value="P:DNA-templated DNA replication"/>
    <property type="evidence" value="ECO:0007669"/>
    <property type="project" value="UniProtKB-UniRule"/>
</dbReference>
<dbReference type="GO" id="GO:0042276">
    <property type="term" value="P:error-prone translesion synthesis"/>
    <property type="evidence" value="ECO:0000318"/>
    <property type="project" value="GO_Central"/>
</dbReference>
<dbReference type="GO" id="GO:0009432">
    <property type="term" value="P:SOS response"/>
    <property type="evidence" value="ECO:0000318"/>
    <property type="project" value="GO_Central"/>
</dbReference>
<dbReference type="CDD" id="cd03586">
    <property type="entry name" value="PolY_Pol_IV_kappa"/>
    <property type="match status" value="1"/>
</dbReference>
<dbReference type="FunFam" id="1.10.150.20:FF:000019">
    <property type="entry name" value="DNA polymerase IV"/>
    <property type="match status" value="1"/>
</dbReference>
<dbReference type="FunFam" id="3.30.1490.100:FF:000011">
    <property type="entry name" value="DNA polymerase IV"/>
    <property type="match status" value="1"/>
</dbReference>
<dbReference type="FunFam" id="3.30.70.270:FF:000002">
    <property type="entry name" value="DNA polymerase IV"/>
    <property type="match status" value="1"/>
</dbReference>
<dbReference type="FunFam" id="3.40.1170.60:FF:000001">
    <property type="entry name" value="DNA polymerase IV"/>
    <property type="match status" value="1"/>
</dbReference>
<dbReference type="Gene3D" id="3.30.70.270">
    <property type="match status" value="1"/>
</dbReference>
<dbReference type="Gene3D" id="3.40.1170.60">
    <property type="match status" value="1"/>
</dbReference>
<dbReference type="Gene3D" id="1.10.150.20">
    <property type="entry name" value="5' to 3' exonuclease, C-terminal subdomain"/>
    <property type="match status" value="1"/>
</dbReference>
<dbReference type="Gene3D" id="3.30.1490.100">
    <property type="entry name" value="DNA polymerase, Y-family, little finger domain"/>
    <property type="match status" value="1"/>
</dbReference>
<dbReference type="HAMAP" id="MF_01113">
    <property type="entry name" value="DNApol_IV"/>
    <property type="match status" value="1"/>
</dbReference>
<dbReference type="InterPro" id="IPR043502">
    <property type="entry name" value="DNA/RNA_pol_sf"/>
</dbReference>
<dbReference type="InterPro" id="IPR036775">
    <property type="entry name" value="DNA_pol_Y-fam_lit_finger_sf"/>
</dbReference>
<dbReference type="InterPro" id="IPR017961">
    <property type="entry name" value="DNA_pol_Y-fam_little_finger"/>
</dbReference>
<dbReference type="InterPro" id="IPR050116">
    <property type="entry name" value="DNA_polymerase-Y"/>
</dbReference>
<dbReference type="InterPro" id="IPR022880">
    <property type="entry name" value="DNApol_IV"/>
</dbReference>
<dbReference type="InterPro" id="IPR053848">
    <property type="entry name" value="IMS_HHH_1"/>
</dbReference>
<dbReference type="InterPro" id="IPR043128">
    <property type="entry name" value="Rev_trsase/Diguanyl_cyclase"/>
</dbReference>
<dbReference type="InterPro" id="IPR001126">
    <property type="entry name" value="UmuC"/>
</dbReference>
<dbReference type="NCBIfam" id="NF002677">
    <property type="entry name" value="PRK02406.1"/>
    <property type="match status" value="1"/>
</dbReference>
<dbReference type="PANTHER" id="PTHR11076:SF33">
    <property type="entry name" value="DNA POLYMERASE KAPPA"/>
    <property type="match status" value="1"/>
</dbReference>
<dbReference type="PANTHER" id="PTHR11076">
    <property type="entry name" value="DNA REPAIR POLYMERASE UMUC / TRANSFERASE FAMILY MEMBER"/>
    <property type="match status" value="1"/>
</dbReference>
<dbReference type="Pfam" id="PF00817">
    <property type="entry name" value="IMS"/>
    <property type="match status" value="1"/>
</dbReference>
<dbReference type="Pfam" id="PF11799">
    <property type="entry name" value="IMS_C"/>
    <property type="match status" value="1"/>
</dbReference>
<dbReference type="Pfam" id="PF21999">
    <property type="entry name" value="IMS_HHH_1"/>
    <property type="match status" value="1"/>
</dbReference>
<dbReference type="SUPFAM" id="SSF56672">
    <property type="entry name" value="DNA/RNA polymerases"/>
    <property type="match status" value="1"/>
</dbReference>
<dbReference type="SUPFAM" id="SSF100879">
    <property type="entry name" value="Lesion bypass DNA polymerase (Y-family), little finger domain"/>
    <property type="match status" value="1"/>
</dbReference>
<dbReference type="PROSITE" id="PS50173">
    <property type="entry name" value="UMUC"/>
    <property type="match status" value="1"/>
</dbReference>
<proteinExistence type="inferred from homology"/>
<evidence type="ECO:0000255" key="1">
    <source>
        <dbReference type="HAMAP-Rule" id="MF_01113"/>
    </source>
</evidence>
<gene>
    <name evidence="1" type="primary">dinB</name>
    <name type="ordered locus">PA0923</name>
</gene>
<organism>
    <name type="scientific">Pseudomonas aeruginosa (strain ATCC 15692 / DSM 22644 / CIP 104116 / JCM 14847 / LMG 12228 / 1C / PRS 101 / PAO1)</name>
    <dbReference type="NCBI Taxonomy" id="208964"/>
    <lineage>
        <taxon>Bacteria</taxon>
        <taxon>Pseudomonadati</taxon>
        <taxon>Pseudomonadota</taxon>
        <taxon>Gammaproteobacteria</taxon>
        <taxon>Pseudomonadales</taxon>
        <taxon>Pseudomonadaceae</taxon>
        <taxon>Pseudomonas</taxon>
    </lineage>
</organism>